<gene>
    <name type="primary">TPS7</name>
    <name type="synonym">TPSA</name>
    <name type="ordered locus">At1g06410</name>
    <name type="ORF">T2D23.11</name>
</gene>
<comment type="catalytic activity">
    <reaction>
        <text>D-glucose 6-phosphate + UDP-alpha-D-glucose = alpha,alpha-trehalose 6-phosphate + UDP + H(+)</text>
        <dbReference type="Rhea" id="RHEA:18889"/>
        <dbReference type="ChEBI" id="CHEBI:15378"/>
        <dbReference type="ChEBI" id="CHEBI:58223"/>
        <dbReference type="ChEBI" id="CHEBI:58429"/>
        <dbReference type="ChEBI" id="CHEBI:58885"/>
        <dbReference type="ChEBI" id="CHEBI:61548"/>
        <dbReference type="EC" id="2.4.1.15"/>
    </reaction>
</comment>
<comment type="subunit">
    <text>Binds to the phosphopeptide-binding site of GRF/14-3-3.</text>
</comment>
<comment type="tissue specificity">
    <text evidence="2">Expressed in seedlings, leaves, roots, stems, flowers and siliques.</text>
</comment>
<comment type="PTM">
    <text evidence="3">Phosphorylated.</text>
</comment>
<comment type="similarity">
    <text evidence="4">In the N-terminal section; belongs to the glycosyltransferase 20 family.</text>
</comment>
<comment type="similarity">
    <text evidence="4">In the C-terminal section; belongs to the trehalose phosphatase family.</text>
</comment>
<dbReference type="EC" id="2.4.1.15"/>
<dbReference type="EMBL" id="AC068143">
    <property type="protein sequence ID" value="AAF82169.1"/>
    <property type="molecule type" value="Genomic_DNA"/>
</dbReference>
<dbReference type="EMBL" id="CP002684">
    <property type="protein sequence ID" value="AEE27983.1"/>
    <property type="molecule type" value="Genomic_DNA"/>
</dbReference>
<dbReference type="EMBL" id="CP002684">
    <property type="protein sequence ID" value="ANM59083.1"/>
    <property type="molecule type" value="Genomic_DNA"/>
</dbReference>
<dbReference type="EMBL" id="CP002684">
    <property type="protein sequence ID" value="ANM59084.1"/>
    <property type="molecule type" value="Genomic_DNA"/>
</dbReference>
<dbReference type="EMBL" id="AK228947">
    <property type="protein sequence ID" value="BAF00836.1"/>
    <property type="molecule type" value="mRNA"/>
</dbReference>
<dbReference type="PIR" id="A86200">
    <property type="entry name" value="A86200"/>
</dbReference>
<dbReference type="RefSeq" id="NP_001321475.1">
    <property type="nucleotide sequence ID" value="NM_001331627.1"/>
</dbReference>
<dbReference type="RefSeq" id="NP_001321476.1">
    <property type="nucleotide sequence ID" value="NM_001331626.1"/>
</dbReference>
<dbReference type="RefSeq" id="NP_172129.1">
    <property type="nucleotide sequence ID" value="NM_100521.3"/>
</dbReference>
<dbReference type="SMR" id="Q9LMI0"/>
<dbReference type="BioGRID" id="22393">
    <property type="interactions" value="1"/>
</dbReference>
<dbReference type="FunCoup" id="Q9LMI0">
    <property type="interactions" value="995"/>
</dbReference>
<dbReference type="IntAct" id="Q9LMI0">
    <property type="interactions" value="27"/>
</dbReference>
<dbReference type="STRING" id="3702.Q9LMI0"/>
<dbReference type="CAZy" id="GT20">
    <property type="family name" value="Glycosyltransferase Family 20"/>
</dbReference>
<dbReference type="iPTMnet" id="Q9LMI0"/>
<dbReference type="PaxDb" id="3702-AT1G06410.1"/>
<dbReference type="ProteomicsDB" id="232503"/>
<dbReference type="EnsemblPlants" id="AT1G06410.1">
    <property type="protein sequence ID" value="AT1G06410.1"/>
    <property type="gene ID" value="AT1G06410"/>
</dbReference>
<dbReference type="EnsemblPlants" id="AT1G06410.2">
    <property type="protein sequence ID" value="AT1G06410.2"/>
    <property type="gene ID" value="AT1G06410"/>
</dbReference>
<dbReference type="EnsemblPlants" id="AT1G06410.3">
    <property type="protein sequence ID" value="AT1G06410.3"/>
    <property type="gene ID" value="AT1G06410"/>
</dbReference>
<dbReference type="GeneID" id="837152"/>
<dbReference type="Gramene" id="AT1G06410.1">
    <property type="protein sequence ID" value="AT1G06410.1"/>
    <property type="gene ID" value="AT1G06410"/>
</dbReference>
<dbReference type="Gramene" id="AT1G06410.2">
    <property type="protein sequence ID" value="AT1G06410.2"/>
    <property type="gene ID" value="AT1G06410"/>
</dbReference>
<dbReference type="Gramene" id="AT1G06410.3">
    <property type="protein sequence ID" value="AT1G06410.3"/>
    <property type="gene ID" value="AT1G06410"/>
</dbReference>
<dbReference type="KEGG" id="ath:AT1G06410"/>
<dbReference type="Araport" id="AT1G06410"/>
<dbReference type="TAIR" id="AT1G06410">
    <property type="gene designation" value="TPS7"/>
</dbReference>
<dbReference type="eggNOG" id="KOG1050">
    <property type="taxonomic scope" value="Eukaryota"/>
</dbReference>
<dbReference type="HOGENOM" id="CLU_002351_3_1_1"/>
<dbReference type="InParanoid" id="Q9LMI0"/>
<dbReference type="OMA" id="SHDFIHC"/>
<dbReference type="OrthoDB" id="755951at2759"/>
<dbReference type="PhylomeDB" id="Q9LMI0"/>
<dbReference type="BioCyc" id="ARA:AT1G06410-MONOMER"/>
<dbReference type="PRO" id="PR:Q9LMI0"/>
<dbReference type="Proteomes" id="UP000006548">
    <property type="component" value="Chromosome 1"/>
</dbReference>
<dbReference type="ExpressionAtlas" id="Q9LMI0">
    <property type="expression patterns" value="baseline and differential"/>
</dbReference>
<dbReference type="GO" id="GO:0016757">
    <property type="term" value="F:glycosyltransferase activity"/>
    <property type="evidence" value="ECO:0007669"/>
    <property type="project" value="UniProtKB-KW"/>
</dbReference>
<dbReference type="GO" id="GO:0005992">
    <property type="term" value="P:trehalose biosynthetic process"/>
    <property type="evidence" value="ECO:0007669"/>
    <property type="project" value="InterPro"/>
</dbReference>
<dbReference type="CDD" id="cd03788">
    <property type="entry name" value="GT20_TPS"/>
    <property type="match status" value="1"/>
</dbReference>
<dbReference type="CDD" id="cd01627">
    <property type="entry name" value="HAD_TPP"/>
    <property type="match status" value="1"/>
</dbReference>
<dbReference type="FunFam" id="3.40.50.2000:FF:000010">
    <property type="entry name" value="Alpha,alpha-trehalose-phosphate synthase"/>
    <property type="match status" value="1"/>
</dbReference>
<dbReference type="FunFam" id="3.40.50.1000:FF:000052">
    <property type="entry name" value="Alpha,alpha-trehalose-phosphate synthase [UDP-forming] 6"/>
    <property type="match status" value="1"/>
</dbReference>
<dbReference type="FunFam" id="3.40.50.1000:FF:000054">
    <property type="entry name" value="alpha,alpha-trehalose-phosphate synthase [UDP-forming] 6"/>
    <property type="match status" value="1"/>
</dbReference>
<dbReference type="FunFam" id="3.40.50.2000:FF:000017">
    <property type="entry name" value="alpha,alpha-trehalose-phosphate synthase [UDP-forming] 6"/>
    <property type="match status" value="1"/>
</dbReference>
<dbReference type="Gene3D" id="3.40.50.2000">
    <property type="entry name" value="Glycogen Phosphorylase B"/>
    <property type="match status" value="2"/>
</dbReference>
<dbReference type="Gene3D" id="3.40.50.1000">
    <property type="entry name" value="HAD superfamily/HAD-like"/>
    <property type="match status" value="2"/>
</dbReference>
<dbReference type="InterPro" id="IPR001830">
    <property type="entry name" value="Glyco_trans_20"/>
</dbReference>
<dbReference type="InterPro" id="IPR036412">
    <property type="entry name" value="HAD-like_sf"/>
</dbReference>
<dbReference type="InterPro" id="IPR006379">
    <property type="entry name" value="HAD-SF_hydro_IIB"/>
</dbReference>
<dbReference type="InterPro" id="IPR023214">
    <property type="entry name" value="HAD_sf"/>
</dbReference>
<dbReference type="InterPro" id="IPR003337">
    <property type="entry name" value="Trehalose_PPase"/>
</dbReference>
<dbReference type="NCBIfam" id="TIGR01484">
    <property type="entry name" value="HAD-SF-IIB"/>
    <property type="match status" value="1"/>
</dbReference>
<dbReference type="NCBIfam" id="TIGR00685">
    <property type="entry name" value="T6PP"/>
    <property type="match status" value="1"/>
</dbReference>
<dbReference type="PANTHER" id="PTHR10788:SF116">
    <property type="entry name" value="ALPHA,ALPHA-TREHALOSE-PHOSPHATE SYNTHASE [UDP-FORMING] 7-RELATED"/>
    <property type="match status" value="1"/>
</dbReference>
<dbReference type="PANTHER" id="PTHR10788">
    <property type="entry name" value="TREHALOSE-6-PHOSPHATE SYNTHASE"/>
    <property type="match status" value="1"/>
</dbReference>
<dbReference type="Pfam" id="PF00982">
    <property type="entry name" value="Glyco_transf_20"/>
    <property type="match status" value="1"/>
</dbReference>
<dbReference type="Pfam" id="PF02358">
    <property type="entry name" value="Trehalose_PPase"/>
    <property type="match status" value="1"/>
</dbReference>
<dbReference type="SUPFAM" id="SSF56784">
    <property type="entry name" value="HAD-like"/>
    <property type="match status" value="1"/>
</dbReference>
<dbReference type="SUPFAM" id="SSF53756">
    <property type="entry name" value="UDP-Glycosyltransferase/glycogen phosphorylase"/>
    <property type="match status" value="1"/>
</dbReference>
<evidence type="ECO:0000250" key="1">
    <source>
        <dbReference type="UniProtKB" id="O23617"/>
    </source>
</evidence>
<evidence type="ECO:0000269" key="2">
    <source>
    </source>
</evidence>
<evidence type="ECO:0000269" key="3">
    <source>
    </source>
</evidence>
<evidence type="ECO:0000305" key="4"/>
<sequence>MISRSYTNLLDLASGNFPVMGRERRRLPRVMTVPGNVSEFDEDQAYSVSSDNPSSVSSDRMIIVANRLPLKAEKRNGSWSFSWDQDSLYLQLKDGLPEDMEILYVGSLSVDVDSNEQDDVAQILLDKFKCVPTFFPPDLQSKFYDGFCKRQIWPLFHYMLPFSADHGGRFDRSLWEAYVATNKLFFQKVIEVINPDDDFVWIHDYHLMVLPTFLRRRFNRIRMGFFLHSPFPSSEIYRSLPVREEILKALLNSDLIGFHTFDYARHFLTCCSRMLGLEYQSKRGYIGLEYYGRTVGIKIMPVGINMGRIQSVMRYSEEEGKVMELRNRFEGKTVLLGIDDMDIFKGINLKLLAMEQMLRQHPNWRGRAVLVQIVNPARGKGIDVEEIRGEIEESCRRINGEFGKPGYQPIIYIDTPVSINEINAYYHIAECVVVTAVRDGMNLTPYEYIVCRQGLLGSESDFSGPKKSMLVASEFIGCSPSLSGAIRVNPWNVEATGEALNEALSMSDAEKQLRHEKHFRYVSTHDVAYWSRSFLQDLERICVDHFKKRCWGMGISFGFRVVALDPNFRKLSIPCIVSDYKRAKSRAILLDYDGTLMPQNSINKAPSQEVLNFLDALCEDKKNSIFIVSGRGRESLSKWFTPCKKIGIAAEHGYFLKWSGSEEWETCGQSSDFGWMQIVEPVMKQYTESTDGSSIEIKESALVWQYRDADPGFGSLQAKEMLEHLESVLANEPVAVKSGHYIVEVKPQGVSKGSVSEKIFSSMAGKGKPVDFVLCIGDDRSDEDMFEAIGNAMSKRLLCDNALVFACTVGQKPSKAKYYLDDTTEVTCMLESLAEASEASNFSMRELDEAL</sequence>
<feature type="chain" id="PRO_0000324828" description="Probable alpha,alpha-trehalose-phosphate synthase [UDP-forming] 7">
    <location>
        <begin position="1"/>
        <end position="851"/>
    </location>
</feature>
<feature type="region of interest" description="Glycosyltransferase">
    <location>
        <begin position="59"/>
        <end position="540"/>
    </location>
</feature>
<feature type="modified residue" description="Phosphoserine" evidence="1">
    <location>
        <position position="5"/>
    </location>
</feature>
<feature type="modified residue" description="Phosphothreonine" evidence="1">
    <location>
        <position position="32"/>
    </location>
</feature>
<keyword id="KW-0328">Glycosyltransferase</keyword>
<keyword id="KW-0597">Phosphoprotein</keyword>
<keyword id="KW-1185">Reference proteome</keyword>
<keyword id="KW-0808">Transferase</keyword>
<organism>
    <name type="scientific">Arabidopsis thaliana</name>
    <name type="common">Mouse-ear cress</name>
    <dbReference type="NCBI Taxonomy" id="3702"/>
    <lineage>
        <taxon>Eukaryota</taxon>
        <taxon>Viridiplantae</taxon>
        <taxon>Streptophyta</taxon>
        <taxon>Embryophyta</taxon>
        <taxon>Tracheophyta</taxon>
        <taxon>Spermatophyta</taxon>
        <taxon>Magnoliopsida</taxon>
        <taxon>eudicotyledons</taxon>
        <taxon>Gunneridae</taxon>
        <taxon>Pentapetalae</taxon>
        <taxon>rosids</taxon>
        <taxon>malvids</taxon>
        <taxon>Brassicales</taxon>
        <taxon>Brassicaceae</taxon>
        <taxon>Camelineae</taxon>
        <taxon>Arabidopsis</taxon>
    </lineage>
</organism>
<name>TPS7_ARATH</name>
<proteinExistence type="evidence at protein level"/>
<reference key="1">
    <citation type="journal article" date="2001" name="J. Exp. Bot.">
        <title>Trehalose metabolism in Arabidopsis: occurrence of trehalose and molecular cloning and characterization of trehalose-6-phosphate synthase homologues.</title>
        <authorList>
            <person name="Vogel G."/>
            <person name="Fiehn O."/>
            <person name="Jean-Richard-dit-Bressel L."/>
            <person name="Boller T."/>
            <person name="Wiemken A."/>
            <person name="Aeschbacher R.A."/>
            <person name="Wingler A."/>
        </authorList>
    </citation>
    <scope>NUCLEOTIDE SEQUENCE [MRNA]</scope>
    <scope>TISSUE SPECIFICITY</scope>
    <source>
        <strain>cv. Landsberg erecta</strain>
    </source>
</reference>
<reference key="2">
    <citation type="journal article" date="2000" name="Nature">
        <title>Sequence and analysis of chromosome 1 of the plant Arabidopsis thaliana.</title>
        <authorList>
            <person name="Theologis A."/>
            <person name="Ecker J.R."/>
            <person name="Palm C.J."/>
            <person name="Federspiel N.A."/>
            <person name="Kaul S."/>
            <person name="White O."/>
            <person name="Alonso J."/>
            <person name="Altafi H."/>
            <person name="Araujo R."/>
            <person name="Bowman C.L."/>
            <person name="Brooks S.Y."/>
            <person name="Buehler E."/>
            <person name="Chan A."/>
            <person name="Chao Q."/>
            <person name="Chen H."/>
            <person name="Cheuk R.F."/>
            <person name="Chin C.W."/>
            <person name="Chung M.K."/>
            <person name="Conn L."/>
            <person name="Conway A.B."/>
            <person name="Conway A.R."/>
            <person name="Creasy T.H."/>
            <person name="Dewar K."/>
            <person name="Dunn P."/>
            <person name="Etgu P."/>
            <person name="Feldblyum T.V."/>
            <person name="Feng J.-D."/>
            <person name="Fong B."/>
            <person name="Fujii C.Y."/>
            <person name="Gill J.E."/>
            <person name="Goldsmith A.D."/>
            <person name="Haas B."/>
            <person name="Hansen N.F."/>
            <person name="Hughes B."/>
            <person name="Huizar L."/>
            <person name="Hunter J.L."/>
            <person name="Jenkins J."/>
            <person name="Johnson-Hopson C."/>
            <person name="Khan S."/>
            <person name="Khaykin E."/>
            <person name="Kim C.J."/>
            <person name="Koo H.L."/>
            <person name="Kremenetskaia I."/>
            <person name="Kurtz D.B."/>
            <person name="Kwan A."/>
            <person name="Lam B."/>
            <person name="Langin-Hooper S."/>
            <person name="Lee A."/>
            <person name="Lee J.M."/>
            <person name="Lenz C.A."/>
            <person name="Li J.H."/>
            <person name="Li Y.-P."/>
            <person name="Lin X."/>
            <person name="Liu S.X."/>
            <person name="Liu Z.A."/>
            <person name="Luros J.S."/>
            <person name="Maiti R."/>
            <person name="Marziali A."/>
            <person name="Militscher J."/>
            <person name="Miranda M."/>
            <person name="Nguyen M."/>
            <person name="Nierman W.C."/>
            <person name="Osborne B.I."/>
            <person name="Pai G."/>
            <person name="Peterson J."/>
            <person name="Pham P.K."/>
            <person name="Rizzo M."/>
            <person name="Rooney T."/>
            <person name="Rowley D."/>
            <person name="Sakano H."/>
            <person name="Salzberg S.L."/>
            <person name="Schwartz J.R."/>
            <person name="Shinn P."/>
            <person name="Southwick A.M."/>
            <person name="Sun H."/>
            <person name="Tallon L.J."/>
            <person name="Tambunga G."/>
            <person name="Toriumi M.J."/>
            <person name="Town C.D."/>
            <person name="Utterback T."/>
            <person name="Van Aken S."/>
            <person name="Vaysberg M."/>
            <person name="Vysotskaia V.S."/>
            <person name="Walker M."/>
            <person name="Wu D."/>
            <person name="Yu G."/>
            <person name="Fraser C.M."/>
            <person name="Venter J.C."/>
            <person name="Davis R.W."/>
        </authorList>
    </citation>
    <scope>NUCLEOTIDE SEQUENCE [LARGE SCALE GENOMIC DNA]</scope>
    <source>
        <strain>cv. Columbia</strain>
    </source>
</reference>
<reference key="3">
    <citation type="journal article" date="2017" name="Plant J.">
        <title>Araport11: a complete reannotation of the Arabidopsis thaliana reference genome.</title>
        <authorList>
            <person name="Cheng C.Y."/>
            <person name="Krishnakumar V."/>
            <person name="Chan A.P."/>
            <person name="Thibaud-Nissen F."/>
            <person name="Schobel S."/>
            <person name="Town C.D."/>
        </authorList>
    </citation>
    <scope>GENOME REANNOTATION</scope>
    <source>
        <strain>cv. Columbia</strain>
    </source>
</reference>
<reference key="4">
    <citation type="submission" date="2006-07" db="EMBL/GenBank/DDBJ databases">
        <title>Large-scale analysis of RIKEN Arabidopsis full-length (RAFL) cDNAs.</title>
        <authorList>
            <person name="Totoki Y."/>
            <person name="Seki M."/>
            <person name="Ishida J."/>
            <person name="Nakajima M."/>
            <person name="Enju A."/>
            <person name="Kamiya A."/>
            <person name="Narusaka M."/>
            <person name="Shin-i T."/>
            <person name="Nakagawa M."/>
            <person name="Sakamoto N."/>
            <person name="Oishi K."/>
            <person name="Kohara Y."/>
            <person name="Kobayashi M."/>
            <person name="Toyoda A."/>
            <person name="Sakaki Y."/>
            <person name="Sakurai T."/>
            <person name="Iida K."/>
            <person name="Akiyama K."/>
            <person name="Satou M."/>
            <person name="Toyoda T."/>
            <person name="Konagaya A."/>
            <person name="Carninci P."/>
            <person name="Kawai J."/>
            <person name="Hayashizaki Y."/>
            <person name="Shinozaki K."/>
        </authorList>
    </citation>
    <scope>NUCLEOTIDE SEQUENCE [LARGE SCALE MRNA] OF 559-851</scope>
    <source>
        <strain>cv. Columbia</strain>
    </source>
</reference>
<reference key="5">
    <citation type="journal article" date="2001" name="Trends Plant Sci.">
        <title>An unexpected plethora of trehalose biosynthesis genes in Arabidopsis thaliana.</title>
        <authorList>
            <person name="Leyman B."/>
            <person name="Van Dijck P."/>
            <person name="Thevelein J.M."/>
        </authorList>
    </citation>
    <scope>GENE FAMILY</scope>
    <scope>NOMENCLATURE</scope>
</reference>
<reference key="6">
    <citation type="journal article" date="2006" name="Plant J.">
        <title>Phosphorylation and 14-3-3 binding of Arabidopsis trehalose-phosphate synthase 5 in response to 2-deoxyglucose.</title>
        <authorList>
            <person name="Harthill J.E."/>
            <person name="Meek S.E.M."/>
            <person name="Morrice N."/>
            <person name="Peggie M.W."/>
            <person name="Borch J."/>
            <person name="Wong B.H.C."/>
            <person name="Mackintosh C."/>
        </authorList>
    </citation>
    <scope>PHOSPHORYLATION</scope>
    <scope>INTERACTION WITH GRF/14-3-3</scope>
    <scope>IDENTIFICATION BY MASS SPECTROMETRY</scope>
</reference>
<reference key="7">
    <citation type="journal article" date="2009" name="J. Proteomics">
        <title>Phosphoproteomic analysis of nuclei-enriched fractions from Arabidopsis thaliana.</title>
        <authorList>
            <person name="Jones A.M.E."/>
            <person name="MacLean D."/>
            <person name="Studholme D.J."/>
            <person name="Serna-Sanz A."/>
            <person name="Andreasson E."/>
            <person name="Rathjen J.P."/>
            <person name="Peck S.C."/>
        </authorList>
    </citation>
    <scope>IDENTIFICATION BY MASS SPECTROMETRY [LARGE SCALE ANALYSIS]</scope>
    <source>
        <strain>cv. Columbia</strain>
    </source>
</reference>
<reference key="8">
    <citation type="journal article" date="2009" name="Plant Physiol.">
        <title>Large-scale Arabidopsis phosphoproteome profiling reveals novel chloroplast kinase substrates and phosphorylation networks.</title>
        <authorList>
            <person name="Reiland S."/>
            <person name="Messerli G."/>
            <person name="Baerenfaller K."/>
            <person name="Gerrits B."/>
            <person name="Endler A."/>
            <person name="Grossmann J."/>
            <person name="Gruissem W."/>
            <person name="Baginsky S."/>
        </authorList>
    </citation>
    <scope>IDENTIFICATION BY MASS SPECTROMETRY [LARGE SCALE ANALYSIS]</scope>
</reference>
<protein>
    <recommendedName>
        <fullName>Probable alpha,alpha-trehalose-phosphate synthase [UDP-forming] 7</fullName>
        <ecNumber>2.4.1.15</ecNumber>
    </recommendedName>
    <alternativeName>
        <fullName>Trehalose-6-phosphate synthase 7</fullName>
        <shortName>AtTPS7</shortName>
    </alternativeName>
</protein>
<accession>Q9LMI0</accession>
<accession>Q0WPW3</accession>